<proteinExistence type="evidence at protein level"/>
<sequence length="106" mass="11859">MVIRGAVYRVDFGDAKRGHEQRGRRYAVVISPGSMPWSVVTVVPTSTSAQPAVFRPELEVMGTKTRFLVDQIRTIGIVYVHGDPVDYLDRDQMAKVEHAVARYLGL</sequence>
<reference key="1">
    <citation type="journal article" date="1998" name="Nature">
        <title>Deciphering the biology of Mycobacterium tuberculosis from the complete genome sequence.</title>
        <authorList>
            <person name="Cole S.T."/>
            <person name="Brosch R."/>
            <person name="Parkhill J."/>
            <person name="Garnier T."/>
            <person name="Churcher C.M."/>
            <person name="Harris D.E."/>
            <person name="Gordon S.V."/>
            <person name="Eiglmeier K."/>
            <person name="Gas S."/>
            <person name="Barry C.E. III"/>
            <person name="Tekaia F."/>
            <person name="Badcock K."/>
            <person name="Basham D."/>
            <person name="Brown D."/>
            <person name="Chillingworth T."/>
            <person name="Connor R."/>
            <person name="Davies R.M."/>
            <person name="Devlin K."/>
            <person name="Feltwell T."/>
            <person name="Gentles S."/>
            <person name="Hamlin N."/>
            <person name="Holroyd S."/>
            <person name="Hornsby T."/>
            <person name="Jagels K."/>
            <person name="Krogh A."/>
            <person name="McLean J."/>
            <person name="Moule S."/>
            <person name="Murphy L.D."/>
            <person name="Oliver S."/>
            <person name="Osborne J."/>
            <person name="Quail M.A."/>
            <person name="Rajandream M.A."/>
            <person name="Rogers J."/>
            <person name="Rutter S."/>
            <person name="Seeger K."/>
            <person name="Skelton S."/>
            <person name="Squares S."/>
            <person name="Squares R."/>
            <person name="Sulston J.E."/>
            <person name="Taylor K."/>
            <person name="Whitehead S."/>
            <person name="Barrell B.G."/>
        </authorList>
    </citation>
    <scope>NUCLEOTIDE SEQUENCE [LARGE SCALE GENOMIC DNA]</scope>
    <source>
        <strain>ATCC 25618 / H37Rv</strain>
    </source>
</reference>
<reference key="2">
    <citation type="submission" date="2013-11" db="EMBL/GenBank/DDBJ databases">
        <title>The genome sequence of Mycobacterium tuberculosis H37Rv.</title>
        <authorList>
            <consortium name="The Broad Institute Genome Sequencing Platform"/>
            <person name="Galagan J."/>
            <person name="Kreiswirth B."/>
            <person name="Dobos K."/>
            <person name="Fortune S."/>
            <person name="Fitzgerald M."/>
            <person name="Young S.K."/>
            <person name="Zeng Q."/>
            <person name="Gargeya S."/>
            <person name="Abouelleil A."/>
            <person name="Alvarado L."/>
            <person name="Berlin A.M."/>
            <person name="Chapman S.B."/>
            <person name="Gainer-Dewar J."/>
            <person name="Goldberg J."/>
            <person name="Gnerre S."/>
            <person name="Griggs A."/>
            <person name="Gujja S."/>
            <person name="Hansen M."/>
            <person name="Howarth C."/>
            <person name="Imamovic A."/>
            <person name="Larimer J."/>
            <person name="McCowan C."/>
            <person name="Murphy C."/>
            <person name="Pearson M."/>
            <person name="Poon T."/>
            <person name="Priest M."/>
            <person name="Roberts A."/>
            <person name="Saif S."/>
            <person name="Shea T."/>
            <person name="Sykes S."/>
            <person name="Wortman J."/>
            <person name="Nusbaum C."/>
            <person name="Birren B."/>
        </authorList>
    </citation>
    <scope>NUCLEOTIDE SEQUENCE [LARGE SCALE GENOMIC DNA]</scope>
    <source>
        <strain>ATCC 25618 / H37Rv</strain>
    </source>
</reference>
<reference key="3">
    <citation type="submission" date="2014-04" db="EMBL/GenBank/DDBJ databases">
        <title>The genome sequence of Mycobacterium tuberculosis H37Rv.</title>
        <authorList>
            <consortium name="The Broad Institute Genomics Platform"/>
            <consortium name="The Broad Institute Genome Sequencing Center for Infectious Disease"/>
            <person name="Earl A.M."/>
            <person name="Kreiswirth B."/>
            <person name="Gomez J."/>
            <person name="Victor T."/>
            <person name="Desjardins C."/>
            <person name="Abeel T."/>
            <person name="Young S."/>
            <person name="Zeng Q."/>
            <person name="Gargeya S."/>
            <person name="Abouelleil A."/>
            <person name="Alvarado L."/>
            <person name="Chapman S.B."/>
            <person name="Gainer-Dewar J."/>
            <person name="Goldberg J."/>
            <person name="Griggs A."/>
            <person name="Gujja S."/>
            <person name="Hansen M."/>
            <person name="Howarth C."/>
            <person name="Imamovic A."/>
            <person name="Larimer J."/>
            <person name="Murphy C."/>
            <person name="Naylor J."/>
            <person name="Pearson M."/>
            <person name="Poon T.W."/>
            <person name="Priest M."/>
            <person name="Roberts A."/>
            <person name="Saif S."/>
            <person name="Shea T."/>
            <person name="Sykes S."/>
            <person name="Wortman J."/>
            <person name="Nusbaum C."/>
            <person name="Birren B."/>
        </authorList>
    </citation>
    <scope>NUCLEOTIDE SEQUENCE [LARGE SCALE GENOMIC DNA]</scope>
    <source>
        <strain>ATCC 25618 / H37Rv</strain>
    </source>
</reference>
<reference key="4">
    <citation type="journal article" date="2011" name="Mol. Cell. Proteomics">
        <title>Proteogenomic analysis of Mycobacterium tuberculosis by high resolution mass spectrometry.</title>
        <authorList>
            <person name="Kelkar D.S."/>
            <person name="Kumar D."/>
            <person name="Kumar P."/>
            <person name="Balakrishnan L."/>
            <person name="Muthusamy B."/>
            <person name="Yadav A.K."/>
            <person name="Shrivastava P."/>
            <person name="Marimuthu A."/>
            <person name="Anand S."/>
            <person name="Sundaram H."/>
            <person name="Kingsbury R."/>
            <person name="Harsha H.C."/>
            <person name="Nair B."/>
            <person name="Prasad T.S."/>
            <person name="Chauhan D.S."/>
            <person name="Katoch K."/>
            <person name="Katoch V.M."/>
            <person name="Kumar P."/>
            <person name="Chaerkady R."/>
            <person name="Ramachandran S."/>
            <person name="Dash D."/>
            <person name="Pandey A."/>
        </authorList>
    </citation>
    <scope>IDENTIFICATION BY MASS SPECTROMETRY [LARGE SCALE ANALYSIS]</scope>
    <source>
        <strain>ATCC 25618 / H37Rv</strain>
    </source>
</reference>
<accession>V5QRX7</accession>
<evidence type="ECO:0000250" key="1">
    <source>
        <dbReference type="UniProtKB" id="P9WIH9"/>
    </source>
</evidence>
<evidence type="ECO:0000305" key="2"/>
<evidence type="ECO:0000312" key="3">
    <source>
        <dbReference type="EMBL" id="AHB18619.1"/>
    </source>
</evidence>
<evidence type="ECO:0000312" key="4">
    <source>
        <dbReference type="EMBL" id="CCP45908.1"/>
    </source>
</evidence>
<evidence type="ECO:0000312" key="5">
    <source>
        <dbReference type="EMBL" id="KBJ29144.1"/>
    </source>
</evidence>
<organism>
    <name type="scientific">Mycobacterium tuberculosis (strain ATCC 25618 / H37Rv)</name>
    <dbReference type="NCBI Taxonomy" id="83332"/>
    <lineage>
        <taxon>Bacteria</taxon>
        <taxon>Bacillati</taxon>
        <taxon>Actinomycetota</taxon>
        <taxon>Actinomycetes</taxon>
        <taxon>Mycobacteriales</taxon>
        <taxon>Mycobacteriaceae</taxon>
        <taxon>Mycobacterium</taxon>
        <taxon>Mycobacterium tuberculosis complex</taxon>
    </lineage>
</organism>
<keyword id="KW-1185">Reference proteome</keyword>
<keyword id="KW-1277">Toxin-antitoxin system</keyword>
<name>3098A_MYCTU</name>
<feature type="chain" id="PRO_0000431255" description="Putative toxin Rv3098A/RVBD_3098A">
    <location>
        <begin position="1"/>
        <end position="106"/>
    </location>
</feature>
<protein>
    <recommendedName>
        <fullName evidence="2">Putative toxin Rv3098A/RVBD_3098A</fullName>
    </recommendedName>
</protein>
<gene>
    <name evidence="4" type="ordered locus">Rv3098A</name>
    <name evidence="3" type="ordered locus">RVBD_3098A</name>
    <name evidence="5" type="ORF">P425_03229</name>
</gene>
<dbReference type="EMBL" id="AL123456">
    <property type="protein sequence ID" value="CCP45908.1"/>
    <property type="molecule type" value="Genomic_DNA"/>
</dbReference>
<dbReference type="EMBL" id="CP003248">
    <property type="protein sequence ID" value="AHB18619.1"/>
    <property type="molecule type" value="Genomic_DNA"/>
</dbReference>
<dbReference type="EMBL" id="JLDD01000038">
    <property type="protein sequence ID" value="KBJ29144.1"/>
    <property type="molecule type" value="Genomic_DNA"/>
</dbReference>
<dbReference type="RefSeq" id="YP_007411812.1">
    <property type="nucleotide sequence ID" value="NC_000962.3"/>
</dbReference>
<dbReference type="SMR" id="V5QRX7"/>
<dbReference type="STRING" id="83332.Rv3098A"/>
<dbReference type="PaxDb" id="83332-Rv3098A"/>
<dbReference type="GeneID" id="14515872"/>
<dbReference type="KEGG" id="mtu:Rv3098A"/>
<dbReference type="KEGG" id="mtv:RVBD_3098A"/>
<dbReference type="PATRIC" id="fig|83332.111.peg.3452"/>
<dbReference type="TubercuList" id="Rv3098A"/>
<dbReference type="eggNOG" id="COG2337">
    <property type="taxonomic scope" value="Bacteria"/>
</dbReference>
<dbReference type="HOGENOM" id="CLU_176999_0_0_11"/>
<dbReference type="InParanoid" id="V5QRX7"/>
<dbReference type="OrthoDB" id="4225032at2"/>
<dbReference type="Proteomes" id="UP000001584">
    <property type="component" value="Chromosome"/>
</dbReference>
<dbReference type="GO" id="GO:0003677">
    <property type="term" value="F:DNA binding"/>
    <property type="evidence" value="ECO:0007669"/>
    <property type="project" value="InterPro"/>
</dbReference>
<dbReference type="GO" id="GO:0004521">
    <property type="term" value="F:RNA endonuclease activity"/>
    <property type="evidence" value="ECO:0000318"/>
    <property type="project" value="GO_Central"/>
</dbReference>
<dbReference type="GO" id="GO:0006402">
    <property type="term" value="P:mRNA catabolic process"/>
    <property type="evidence" value="ECO:0000318"/>
    <property type="project" value="GO_Central"/>
</dbReference>
<dbReference type="GO" id="GO:0016075">
    <property type="term" value="P:rRNA catabolic process"/>
    <property type="evidence" value="ECO:0000318"/>
    <property type="project" value="GO_Central"/>
</dbReference>
<dbReference type="Gene3D" id="2.30.30.110">
    <property type="match status" value="1"/>
</dbReference>
<dbReference type="InterPro" id="IPR003477">
    <property type="entry name" value="PemK-like"/>
</dbReference>
<dbReference type="InterPro" id="IPR011067">
    <property type="entry name" value="Plasmid_toxin/cell-grow_inhib"/>
</dbReference>
<dbReference type="PANTHER" id="PTHR33988:SF2">
    <property type="entry name" value="ENDORIBONUCLEASE MAZF"/>
    <property type="match status" value="1"/>
</dbReference>
<dbReference type="PANTHER" id="PTHR33988">
    <property type="entry name" value="ENDORIBONUCLEASE MAZF-RELATED"/>
    <property type="match status" value="1"/>
</dbReference>
<dbReference type="Pfam" id="PF02452">
    <property type="entry name" value="PemK_toxin"/>
    <property type="match status" value="1"/>
</dbReference>
<dbReference type="SUPFAM" id="SSF50118">
    <property type="entry name" value="Cell growth inhibitor/plasmid maintenance toxic component"/>
    <property type="match status" value="1"/>
</dbReference>
<comment type="function">
    <text evidence="2">Putative toxic component of a possible type II toxin-antitoxin (TA) system. Its toxic effect may be neutralized by cognate antitoxin Rv3098B/RVBD_3098B.</text>
</comment>
<comment type="subunit">
    <text evidence="1">Forms a complex with cognate antitoxin Rv3098B/RVBD_3098B.</text>
</comment>
<comment type="similarity">
    <text evidence="2">Belongs to the PemK/MazF family.</text>
</comment>